<protein>
    <recommendedName>
        <fullName>Pre-rRNA-processing protein IPI3</fullName>
    </recommendedName>
</protein>
<proteinExistence type="inferred from homology"/>
<reference key="1">
    <citation type="journal article" date="2007" name="Nat. Biotechnol.">
        <title>Genome sequence of the lignocellulose-bioconverting and xylose-fermenting yeast Pichia stipitis.</title>
        <authorList>
            <person name="Jeffries T.W."/>
            <person name="Grigoriev I.V."/>
            <person name="Grimwood J."/>
            <person name="Laplaza J.M."/>
            <person name="Aerts A."/>
            <person name="Salamov A."/>
            <person name="Schmutz J."/>
            <person name="Lindquist E."/>
            <person name="Dehal P."/>
            <person name="Shapiro H."/>
            <person name="Jin Y.-S."/>
            <person name="Passoth V."/>
            <person name="Richardson P.M."/>
        </authorList>
    </citation>
    <scope>NUCLEOTIDE SEQUENCE [LARGE SCALE GENOMIC DNA]</scope>
    <source>
        <strain>ATCC 58785 / CBS 6054 / NBRC 10063 / NRRL Y-11545</strain>
    </source>
</reference>
<keyword id="KW-0539">Nucleus</keyword>
<keyword id="KW-1185">Reference proteome</keyword>
<keyword id="KW-0677">Repeat</keyword>
<keyword id="KW-0690">Ribosome biogenesis</keyword>
<keyword id="KW-0698">rRNA processing</keyword>
<keyword id="KW-0853">WD repeat</keyword>
<feature type="chain" id="PRO_0000308743" description="Pre-rRNA-processing protein IPI3">
    <location>
        <begin position="1"/>
        <end position="525"/>
    </location>
</feature>
<feature type="repeat" description="WD 1">
    <location>
        <begin position="105"/>
        <end position="144"/>
    </location>
</feature>
<feature type="repeat" description="WD 2">
    <location>
        <begin position="147"/>
        <end position="186"/>
    </location>
</feature>
<feature type="repeat" description="WD 3">
    <location>
        <begin position="204"/>
        <end position="247"/>
    </location>
</feature>
<feature type="repeat" description="WD 4">
    <location>
        <begin position="326"/>
        <end position="374"/>
    </location>
</feature>
<organism>
    <name type="scientific">Scheffersomyces stipitis (strain ATCC 58785 / CBS 6054 / NBRC 10063 / NRRL Y-11545)</name>
    <name type="common">Yeast</name>
    <name type="synonym">Pichia stipitis</name>
    <dbReference type="NCBI Taxonomy" id="322104"/>
    <lineage>
        <taxon>Eukaryota</taxon>
        <taxon>Fungi</taxon>
        <taxon>Dikarya</taxon>
        <taxon>Ascomycota</taxon>
        <taxon>Saccharomycotina</taxon>
        <taxon>Pichiomycetes</taxon>
        <taxon>Debaryomycetaceae</taxon>
        <taxon>Scheffersomyces</taxon>
    </lineage>
</organism>
<name>IPI3_PICST</name>
<evidence type="ECO:0000250" key="1">
    <source>
        <dbReference type="UniProtKB" id="P53877"/>
    </source>
</evidence>
<evidence type="ECO:0000305" key="2"/>
<comment type="function">
    <text evidence="1">Component of the RIX1 complex required for processing of ITS2 sequences from 35S pre-rRNA.</text>
</comment>
<comment type="subunit">
    <text evidence="1">Component of the RIX1 complex, composed of IPI1, RIX1/IPI2 and IPI3 in a 1:2:2 stoichiometry. The complex interacts (via RIX1) with MDN1 (via its hexameric AAA ATPase ring) and the pre-60S ribosome particles.</text>
</comment>
<comment type="subcellular location">
    <subcellularLocation>
        <location evidence="1">Nucleus</location>
    </subcellularLocation>
</comment>
<comment type="similarity">
    <text evidence="2">Belongs to the WD repeat IPI3/WDR18 family.</text>
</comment>
<dbReference type="EMBL" id="CP000496">
    <property type="protein sequence ID" value="ABN64353.2"/>
    <property type="molecule type" value="Genomic_DNA"/>
</dbReference>
<dbReference type="RefSeq" id="XP_001382382.2">
    <property type="nucleotide sequence ID" value="XM_001382345.1"/>
</dbReference>
<dbReference type="SMR" id="A3LNM0"/>
<dbReference type="FunCoup" id="A3LNM0">
    <property type="interactions" value="482"/>
</dbReference>
<dbReference type="STRING" id="322104.A3LNM0"/>
<dbReference type="GeneID" id="4837183"/>
<dbReference type="KEGG" id="pic:PICST_41524"/>
<dbReference type="eggNOG" id="KOG0646">
    <property type="taxonomic scope" value="Eukaryota"/>
</dbReference>
<dbReference type="HOGENOM" id="CLU_029749_4_0_1"/>
<dbReference type="InParanoid" id="A3LNM0"/>
<dbReference type="OMA" id="WEAHYNK"/>
<dbReference type="OrthoDB" id="756370at2759"/>
<dbReference type="Proteomes" id="UP000002258">
    <property type="component" value="Chromosome 2"/>
</dbReference>
<dbReference type="GO" id="GO:0005656">
    <property type="term" value="C:nuclear pre-replicative complex"/>
    <property type="evidence" value="ECO:0007669"/>
    <property type="project" value="TreeGrafter"/>
</dbReference>
<dbReference type="GO" id="GO:0120330">
    <property type="term" value="C:rixosome complex"/>
    <property type="evidence" value="ECO:0007669"/>
    <property type="project" value="TreeGrafter"/>
</dbReference>
<dbReference type="GO" id="GO:0006261">
    <property type="term" value="P:DNA-templated DNA replication"/>
    <property type="evidence" value="ECO:0007669"/>
    <property type="project" value="TreeGrafter"/>
</dbReference>
<dbReference type="GO" id="GO:0006364">
    <property type="term" value="P:rRNA processing"/>
    <property type="evidence" value="ECO:0007669"/>
    <property type="project" value="UniProtKB-KW"/>
</dbReference>
<dbReference type="Gene3D" id="2.130.10.10">
    <property type="entry name" value="YVTN repeat-like/Quinoprotein amine dehydrogenase"/>
    <property type="match status" value="1"/>
</dbReference>
<dbReference type="InterPro" id="IPR015943">
    <property type="entry name" value="WD40/YVTN_repeat-like_dom_sf"/>
</dbReference>
<dbReference type="InterPro" id="IPR036322">
    <property type="entry name" value="WD40_repeat_dom_sf"/>
</dbReference>
<dbReference type="InterPro" id="IPR001680">
    <property type="entry name" value="WD40_rpt"/>
</dbReference>
<dbReference type="InterPro" id="IPR045227">
    <property type="entry name" value="WDR18/Ipi3/RID3"/>
</dbReference>
<dbReference type="PANTHER" id="PTHR18763:SF0">
    <property type="entry name" value="WD REPEAT-CONTAINING PROTEIN 18"/>
    <property type="match status" value="1"/>
</dbReference>
<dbReference type="PANTHER" id="PTHR18763">
    <property type="entry name" value="WD-REPEAT PROTEIN 18"/>
    <property type="match status" value="1"/>
</dbReference>
<dbReference type="Pfam" id="PF00400">
    <property type="entry name" value="WD40"/>
    <property type="match status" value="1"/>
</dbReference>
<dbReference type="SMART" id="SM00320">
    <property type="entry name" value="WD40"/>
    <property type="match status" value="5"/>
</dbReference>
<dbReference type="SUPFAM" id="SSF50978">
    <property type="entry name" value="WD40 repeat-like"/>
    <property type="match status" value="1"/>
</dbReference>
<dbReference type="PROSITE" id="PS50082">
    <property type="entry name" value="WD_REPEATS_2"/>
    <property type="match status" value="1"/>
</dbReference>
<dbReference type="PROSITE" id="PS50294">
    <property type="entry name" value="WD_REPEATS_REGION"/>
    <property type="match status" value="1"/>
</dbReference>
<gene>
    <name type="primary">IPI3</name>
    <name type="ORF">PICST_41524</name>
</gene>
<sequence>MDESVFYIAEGDPNDKHSQESFALATSIHNSQQHASFRQADAPKNGAILSGSGQGERLIVAAPNKALLNVYSWGKESPDQRIPLPEALTCLALVEHPNTRLFSEFHRNSEFKLPSYRVPWLLAGGSKSGKIYVWELSSGSLLCVKEAHYQNVTVVKFSKCGTFLVAGSDDARCTVWKTLDLIAVFDGDNDESSRNFKPYLAITDNTLAVTDLVLNEPGVINDLKLYTVSRDNTLRIYDIITKQLLTTFILSEAIESVVADPAGRAVYVGLSNGLIRTIPLYNINPNTSVLESIGGNQKIITVESDPNLKFTFLHHQQRISADANKTSILHKNLNNKKNDTENANKPIHVTKLAISLDGTNLISGDSLGRVYVSDIVTRQVVKTFTPCNSPISQIQVSSAPFEALNVSSNSKVDKKHRLIPQLKRVLTGRDATEHQLNLEIPSESRDESDENFAVWLSRKTQEDLEFKNLSGVNSSVKKVANITSDSESKKELEDKLAKLSSAYTQLRSKHEELLKEHSKVLNNKA</sequence>
<accession>A3LNM0</accession>